<evidence type="ECO:0000250" key="1"/>
<evidence type="ECO:0000256" key="2">
    <source>
        <dbReference type="SAM" id="MobiDB-lite"/>
    </source>
</evidence>
<evidence type="ECO:0000305" key="3"/>
<accession>Q04960</accession>
<dbReference type="EMBL" id="X67695">
    <property type="protein sequence ID" value="CAA47925.1"/>
    <property type="molecule type" value="mRNA"/>
</dbReference>
<dbReference type="PIR" id="S35581">
    <property type="entry name" value="S35581"/>
</dbReference>
<dbReference type="SMR" id="Q04960"/>
<dbReference type="EnsemblPlants" id="KGN52169">
    <property type="protein sequence ID" value="KGN52169"/>
    <property type="gene ID" value="Csa_5G613470"/>
</dbReference>
<dbReference type="Gramene" id="KGN52169">
    <property type="protein sequence ID" value="KGN52169"/>
    <property type="gene ID" value="Csa_5G613470"/>
</dbReference>
<dbReference type="eggNOG" id="KOG0712">
    <property type="taxonomic scope" value="Eukaryota"/>
</dbReference>
<dbReference type="OMA" id="FPDVINP"/>
<dbReference type="OrthoDB" id="550424at2759"/>
<dbReference type="GO" id="GO:0005886">
    <property type="term" value="C:plasma membrane"/>
    <property type="evidence" value="ECO:0007669"/>
    <property type="project" value="UniProtKB-SubCell"/>
</dbReference>
<dbReference type="GO" id="GO:0005524">
    <property type="term" value="F:ATP binding"/>
    <property type="evidence" value="ECO:0007669"/>
    <property type="project" value="InterPro"/>
</dbReference>
<dbReference type="GO" id="GO:0030544">
    <property type="term" value="F:Hsp70 protein binding"/>
    <property type="evidence" value="ECO:0007669"/>
    <property type="project" value="InterPro"/>
</dbReference>
<dbReference type="GO" id="GO:0051082">
    <property type="term" value="F:unfolded protein binding"/>
    <property type="evidence" value="ECO:0007669"/>
    <property type="project" value="InterPro"/>
</dbReference>
<dbReference type="GO" id="GO:0008270">
    <property type="term" value="F:zinc ion binding"/>
    <property type="evidence" value="ECO:0007669"/>
    <property type="project" value="UniProtKB-KW"/>
</dbReference>
<dbReference type="GO" id="GO:0006457">
    <property type="term" value="P:protein folding"/>
    <property type="evidence" value="ECO:0007669"/>
    <property type="project" value="InterPro"/>
</dbReference>
<dbReference type="GO" id="GO:0009408">
    <property type="term" value="P:response to heat"/>
    <property type="evidence" value="ECO:0007669"/>
    <property type="project" value="InterPro"/>
</dbReference>
<dbReference type="CDD" id="cd06257">
    <property type="entry name" value="DnaJ"/>
    <property type="match status" value="1"/>
</dbReference>
<dbReference type="CDD" id="cd10747">
    <property type="entry name" value="DnaJ_C"/>
    <property type="match status" value="1"/>
</dbReference>
<dbReference type="CDD" id="cd10719">
    <property type="entry name" value="DnaJ_zf"/>
    <property type="match status" value="1"/>
</dbReference>
<dbReference type="FunFam" id="2.60.260.20:FF:000068">
    <property type="entry name" value="Chaperone protein dnaJ 3"/>
    <property type="match status" value="1"/>
</dbReference>
<dbReference type="FunFam" id="2.60.260.20:FF:000150">
    <property type="entry name" value="Chaperone protein dnaJ 3"/>
    <property type="match status" value="1"/>
</dbReference>
<dbReference type="FunFam" id="1.10.287.110:FF:000012">
    <property type="entry name" value="dnaJ protein homolog"/>
    <property type="match status" value="1"/>
</dbReference>
<dbReference type="FunFam" id="2.10.230.10:FF:000001">
    <property type="entry name" value="DnaJ subfamily A member 2"/>
    <property type="match status" value="1"/>
</dbReference>
<dbReference type="Gene3D" id="1.10.287.110">
    <property type="entry name" value="DnaJ domain"/>
    <property type="match status" value="1"/>
</dbReference>
<dbReference type="Gene3D" id="2.10.230.10">
    <property type="entry name" value="Heat shock protein DnaJ, cysteine-rich domain"/>
    <property type="match status" value="1"/>
</dbReference>
<dbReference type="Gene3D" id="2.60.260.20">
    <property type="entry name" value="Urease metallochaperone UreE, N-terminal domain"/>
    <property type="match status" value="2"/>
</dbReference>
<dbReference type="HAMAP" id="MF_01152">
    <property type="entry name" value="DnaJ"/>
    <property type="match status" value="1"/>
</dbReference>
<dbReference type="InterPro" id="IPR012724">
    <property type="entry name" value="DnaJ"/>
</dbReference>
<dbReference type="InterPro" id="IPR002939">
    <property type="entry name" value="DnaJ_C"/>
</dbReference>
<dbReference type="InterPro" id="IPR001623">
    <property type="entry name" value="DnaJ_domain"/>
</dbReference>
<dbReference type="InterPro" id="IPR018253">
    <property type="entry name" value="DnaJ_domain_CS"/>
</dbReference>
<dbReference type="InterPro" id="IPR044713">
    <property type="entry name" value="DNJA1/2-like"/>
</dbReference>
<dbReference type="InterPro" id="IPR008971">
    <property type="entry name" value="HSP40/DnaJ_pept-bd"/>
</dbReference>
<dbReference type="InterPro" id="IPR001305">
    <property type="entry name" value="HSP_DnaJ_Cys-rich_dom"/>
</dbReference>
<dbReference type="InterPro" id="IPR036410">
    <property type="entry name" value="HSP_DnaJ_Cys-rich_dom_sf"/>
</dbReference>
<dbReference type="InterPro" id="IPR036869">
    <property type="entry name" value="J_dom_sf"/>
</dbReference>
<dbReference type="PANTHER" id="PTHR43888">
    <property type="entry name" value="DNAJ-LIKE-2, ISOFORM A-RELATED"/>
    <property type="match status" value="1"/>
</dbReference>
<dbReference type="Pfam" id="PF00226">
    <property type="entry name" value="DnaJ"/>
    <property type="match status" value="1"/>
</dbReference>
<dbReference type="Pfam" id="PF01556">
    <property type="entry name" value="DnaJ_C"/>
    <property type="match status" value="1"/>
</dbReference>
<dbReference type="Pfam" id="PF00684">
    <property type="entry name" value="DnaJ_CXXCXGXG"/>
    <property type="match status" value="1"/>
</dbReference>
<dbReference type="PRINTS" id="PR00625">
    <property type="entry name" value="JDOMAIN"/>
</dbReference>
<dbReference type="SMART" id="SM00271">
    <property type="entry name" value="DnaJ"/>
    <property type="match status" value="1"/>
</dbReference>
<dbReference type="SUPFAM" id="SSF46565">
    <property type="entry name" value="Chaperone J-domain"/>
    <property type="match status" value="1"/>
</dbReference>
<dbReference type="SUPFAM" id="SSF57938">
    <property type="entry name" value="DnaJ/Hsp40 cysteine-rich domain"/>
    <property type="match status" value="1"/>
</dbReference>
<dbReference type="SUPFAM" id="SSF49493">
    <property type="entry name" value="HSP40/DnaJ peptide-binding domain"/>
    <property type="match status" value="2"/>
</dbReference>
<dbReference type="PROSITE" id="PS00636">
    <property type="entry name" value="DNAJ_1"/>
    <property type="match status" value="1"/>
</dbReference>
<dbReference type="PROSITE" id="PS50076">
    <property type="entry name" value="DNAJ_2"/>
    <property type="match status" value="1"/>
</dbReference>
<dbReference type="PROSITE" id="PS51188">
    <property type="entry name" value="ZF_CR"/>
    <property type="match status" value="1"/>
</dbReference>
<name>DNJH_CUCSA</name>
<feature type="chain" id="PRO_0000071089" description="DnaJ protein homolog">
    <location>
        <begin position="1"/>
        <end position="410"/>
    </location>
</feature>
<feature type="propeptide" id="PRO_0000396767" description="Removed in mature form" evidence="1">
    <location>
        <begin position="411"/>
        <end position="413"/>
    </location>
</feature>
<feature type="domain" description="J">
    <location>
        <begin position="10"/>
        <end position="75"/>
    </location>
</feature>
<feature type="repeat" description="CXXCXGXG motif">
    <location>
        <begin position="146"/>
        <end position="153"/>
    </location>
</feature>
<feature type="repeat" description="CXXCXGXG motif">
    <location>
        <begin position="162"/>
        <end position="169"/>
    </location>
</feature>
<feature type="repeat" description="CXXCXGXG motif">
    <location>
        <begin position="189"/>
        <end position="196"/>
    </location>
</feature>
<feature type="repeat" description="CXXCXGXG motif">
    <location>
        <begin position="205"/>
        <end position="212"/>
    </location>
</feature>
<feature type="zinc finger region" description="CR-type">
    <location>
        <begin position="133"/>
        <end position="217"/>
    </location>
</feature>
<feature type="region of interest" description="Disordered" evidence="2">
    <location>
        <begin position="387"/>
        <end position="413"/>
    </location>
</feature>
<feature type="modified residue" description="Cysteine methyl ester" evidence="1">
    <location>
        <position position="410"/>
    </location>
</feature>
<feature type="lipid moiety-binding region" description="S-farnesyl cysteine" evidence="1">
    <location>
        <position position="410"/>
    </location>
</feature>
<organism>
    <name type="scientific">Cucumis sativus</name>
    <name type="common">Cucumber</name>
    <dbReference type="NCBI Taxonomy" id="3659"/>
    <lineage>
        <taxon>Eukaryota</taxon>
        <taxon>Viridiplantae</taxon>
        <taxon>Streptophyta</taxon>
        <taxon>Embryophyta</taxon>
        <taxon>Tracheophyta</taxon>
        <taxon>Spermatophyta</taxon>
        <taxon>Magnoliopsida</taxon>
        <taxon>eudicotyledons</taxon>
        <taxon>Gunneridae</taxon>
        <taxon>Pentapetalae</taxon>
        <taxon>rosids</taxon>
        <taxon>fabids</taxon>
        <taxon>Cucurbitales</taxon>
        <taxon>Cucurbitaceae</taxon>
        <taxon>Benincaseae</taxon>
        <taxon>Cucumis</taxon>
    </lineage>
</organism>
<gene>
    <name type="primary">DNAJ1</name>
</gene>
<reference key="1">
    <citation type="journal article" date="1993" name="Arch. Biochem. Biophys.">
        <title>Plant dnaj homologue: molecular cloning, bacterial expression, and expression analysis in tissues of cucumber seedlings.</title>
        <authorList>
            <person name="Preisig-Mueller R."/>
            <person name="Kindl H."/>
        </authorList>
    </citation>
    <scope>NUCLEOTIDE SEQUENCE [MRNA]</scope>
    <source>
        <tissue>Seed</tissue>
    </source>
</reference>
<protein>
    <recommendedName>
        <fullName>DnaJ protein homolog</fullName>
    </recommendedName>
    <alternativeName>
        <fullName>DNAJ-1</fullName>
    </alternativeName>
</protein>
<proteinExistence type="evidence at transcript level"/>
<sequence length="413" mass="46064">MFGRPKKSDNTKYYEILGVSKNASQDDLKKAYRKAAIKNHPDKGGDPEKFKELAQAYEVLSDPEKREIYDQYGEDALKEGMGGGGGHDPFDIFQSFFGGSPFGGGGSSRGRRQRRGEDVIHPLKVSLEDLYNGTSKKLSLSRNVICSKCKGKGSKSGASMKCPGCQGSGMKVSIRHLGPSMIQQMQHPCNECKGTGETINDKDRCSQCKGEKVVQEKKVLEVIVEKGMQNAQKITFPGEADEAPDTVTGDIVFVLQQKEHPKFKRKGDDLFVEHTLSLVESLCGFQFILTHLDGRQLLIKSLPGEVVKPDQFKAINDEGMPMYQRPFMKGKLYIHFSVEFPDSLNPEQCKALEGVLPPRTSVQLSDMELDECEETTLHDVNIEEEMRRKQAQEAYDEDEDMHGGAQRVQCAQQ</sequence>
<keyword id="KW-1003">Cell membrane</keyword>
<keyword id="KW-0143">Chaperone</keyword>
<keyword id="KW-0449">Lipoprotein</keyword>
<keyword id="KW-0472">Membrane</keyword>
<keyword id="KW-0479">Metal-binding</keyword>
<keyword id="KW-0488">Methylation</keyword>
<keyword id="KW-0636">Prenylation</keyword>
<keyword id="KW-0677">Repeat</keyword>
<keyword id="KW-0346">Stress response</keyword>
<keyword id="KW-0862">Zinc</keyword>
<keyword id="KW-0863">Zinc-finger</keyword>
<comment type="function">
    <text>Plays a continuous role in plant development probably in the structural organization of compartments.</text>
</comment>
<comment type="subcellular location">
    <subcellularLocation>
        <location evidence="3">Cell membrane</location>
        <topology evidence="3">Lipid-anchor</topology>
        <orientation evidence="3">Cytoplasmic side</orientation>
    </subcellularLocation>
</comment>
<comment type="tissue specificity">
    <text>Expressed in seedlings in all tissues, but exceedingly high levels in hypocotyledons and roots.</text>
</comment>
<comment type="induction">
    <text>By heat shock; weakly.</text>
</comment>